<organism>
    <name type="scientific">Vibrio vulnificus (strain YJ016)</name>
    <dbReference type="NCBI Taxonomy" id="196600"/>
    <lineage>
        <taxon>Bacteria</taxon>
        <taxon>Pseudomonadati</taxon>
        <taxon>Pseudomonadota</taxon>
        <taxon>Gammaproteobacteria</taxon>
        <taxon>Vibrionales</taxon>
        <taxon>Vibrionaceae</taxon>
        <taxon>Vibrio</taxon>
    </lineage>
</organism>
<sequence>MTPTELKRLYRIIKVQLEYGLDDLLPDHQLAKAPRWMRKSLFWLKNQHPEKPLGDRLRLALQELGPVWIKFGQMLSTRRDLFPPHIADPLALLQDQVSPFDGALAKAQMEQALGGPLETWFSDFDLVPLASASIAQVHTAKLKTTNQEVVLKVIRPDIRPIIDADLKLMRRMASIVAKAMPEARRLKPIEVVREYEKTLLDELDLRREAANAIQLRRNFTDSEELYVPEVYPDFSNETVMVSERIYGIQVSDITGLKANGTNMKLLAERGVSVFFTQVFRDSFFHADMHPGNVFVNPEHPENPQWIGLDCGIVGTLNSEDKRYLAENFLAFFNRDYRRVAELHVDSGWVPADTNIDEFEFAIRIVCEPIFAKPLCEISFGHVLLNLFNTARRFNMEVQPQLVLLQKTLLYVEGLGRQLYPQLDLWETAKPFLEEWMMNQVGPKALINAIKDRAPYWAEKLPELPELLYDSLKQGKAMNQRMDQLYQGYRASKRQQATGKFLFGVGATLVVCSAILVDHTYEQLSLATAIAGVTFWLFSWRAYRR</sequence>
<keyword id="KW-0067">ATP-binding</keyword>
<keyword id="KW-0997">Cell inner membrane</keyword>
<keyword id="KW-1003">Cell membrane</keyword>
<keyword id="KW-0418">Kinase</keyword>
<keyword id="KW-0472">Membrane</keyword>
<keyword id="KW-0547">Nucleotide-binding</keyword>
<keyword id="KW-0808">Transferase</keyword>
<keyword id="KW-0812">Transmembrane</keyword>
<keyword id="KW-1133">Transmembrane helix</keyword>
<keyword id="KW-0831">Ubiquinone biosynthesis</keyword>
<evidence type="ECO:0000255" key="1">
    <source>
        <dbReference type="HAMAP-Rule" id="MF_00414"/>
    </source>
</evidence>
<accession>Q7MQ31</accession>
<reference key="1">
    <citation type="journal article" date="2003" name="Genome Res.">
        <title>Comparative genome analysis of Vibrio vulnificus, a marine pathogen.</title>
        <authorList>
            <person name="Chen C.-Y."/>
            <person name="Wu K.-M."/>
            <person name="Chang Y.-C."/>
            <person name="Chang C.-H."/>
            <person name="Tsai H.-C."/>
            <person name="Liao T.-L."/>
            <person name="Liu Y.-M."/>
            <person name="Chen H.-J."/>
            <person name="Shen A.B.-T."/>
            <person name="Li J.-C."/>
            <person name="Su T.-L."/>
            <person name="Shao C.-P."/>
            <person name="Lee C.-T."/>
            <person name="Hor L.-I."/>
            <person name="Tsai S.-F."/>
        </authorList>
    </citation>
    <scope>NUCLEOTIDE SEQUENCE [LARGE SCALE GENOMIC DNA]</scope>
    <source>
        <strain>YJ016</strain>
    </source>
</reference>
<feature type="chain" id="PRO_0000200723" description="Probable protein kinase UbiB">
    <location>
        <begin position="1"/>
        <end position="544"/>
    </location>
</feature>
<feature type="transmembrane region" description="Helical" evidence="1">
    <location>
        <begin position="496"/>
        <end position="516"/>
    </location>
</feature>
<feature type="transmembrane region" description="Helical" evidence="1">
    <location>
        <begin position="519"/>
        <end position="539"/>
    </location>
</feature>
<feature type="domain" description="Protein kinase" evidence="1">
    <location>
        <begin position="123"/>
        <end position="501"/>
    </location>
</feature>
<feature type="active site" description="Proton acceptor" evidence="1">
    <location>
        <position position="287"/>
    </location>
</feature>
<feature type="binding site" evidence="1">
    <location>
        <begin position="129"/>
        <end position="137"/>
    </location>
    <ligand>
        <name>ATP</name>
        <dbReference type="ChEBI" id="CHEBI:30616"/>
    </ligand>
</feature>
<feature type="binding site" evidence="1">
    <location>
        <position position="152"/>
    </location>
    <ligand>
        <name>ATP</name>
        <dbReference type="ChEBI" id="CHEBI:30616"/>
    </ligand>
</feature>
<name>UBIB_VIBVY</name>
<protein>
    <recommendedName>
        <fullName evidence="1">Probable protein kinase UbiB</fullName>
        <ecNumber evidence="1">2.7.-.-</ecNumber>
    </recommendedName>
    <alternativeName>
        <fullName evidence="1">Ubiquinone biosynthesis protein UbiB</fullName>
    </alternativeName>
</protein>
<comment type="function">
    <text evidence="1">Is probably a protein kinase regulator of UbiI activity which is involved in aerobic coenzyme Q (ubiquinone) biosynthesis.</text>
</comment>
<comment type="pathway">
    <text>Cofactor biosynthesis; ubiquinone biosynthesis [regulation].</text>
</comment>
<comment type="subcellular location">
    <subcellularLocation>
        <location evidence="1">Cell inner membrane</location>
        <topology evidence="1">Multi-pass membrane protein</topology>
    </subcellularLocation>
</comment>
<comment type="similarity">
    <text evidence="1">Belongs to the ABC1 family. UbiB subfamily.</text>
</comment>
<dbReference type="EC" id="2.7.-.-" evidence="1"/>
<dbReference type="EMBL" id="BA000037">
    <property type="protein sequence ID" value="BAC92943.1"/>
    <property type="molecule type" value="Genomic_DNA"/>
</dbReference>
<dbReference type="RefSeq" id="WP_011149182.1">
    <property type="nucleotide sequence ID" value="NC_005139.1"/>
</dbReference>
<dbReference type="SMR" id="Q7MQ31"/>
<dbReference type="STRING" id="672.VV93_v1c01660"/>
<dbReference type="KEGG" id="vvy:VV0179"/>
<dbReference type="PATRIC" id="fig|196600.6.peg.221"/>
<dbReference type="eggNOG" id="COG0661">
    <property type="taxonomic scope" value="Bacteria"/>
</dbReference>
<dbReference type="HOGENOM" id="CLU_006533_0_0_6"/>
<dbReference type="UniPathway" id="UPA00232"/>
<dbReference type="Proteomes" id="UP000002675">
    <property type="component" value="Chromosome I"/>
</dbReference>
<dbReference type="GO" id="GO:0005886">
    <property type="term" value="C:plasma membrane"/>
    <property type="evidence" value="ECO:0007669"/>
    <property type="project" value="UniProtKB-SubCell"/>
</dbReference>
<dbReference type="GO" id="GO:0005524">
    <property type="term" value="F:ATP binding"/>
    <property type="evidence" value="ECO:0007669"/>
    <property type="project" value="UniProtKB-KW"/>
</dbReference>
<dbReference type="GO" id="GO:0004672">
    <property type="term" value="F:protein kinase activity"/>
    <property type="evidence" value="ECO:0007669"/>
    <property type="project" value="UniProtKB-UniRule"/>
</dbReference>
<dbReference type="GO" id="GO:0010795">
    <property type="term" value="P:regulation of ubiquinone biosynthetic process"/>
    <property type="evidence" value="ECO:0007669"/>
    <property type="project" value="UniProtKB-UniRule"/>
</dbReference>
<dbReference type="GO" id="GO:0006744">
    <property type="term" value="P:ubiquinone biosynthetic process"/>
    <property type="evidence" value="ECO:0007669"/>
    <property type="project" value="UniProtKB-UniPathway"/>
</dbReference>
<dbReference type="CDD" id="cd13972">
    <property type="entry name" value="UbiB"/>
    <property type="match status" value="1"/>
</dbReference>
<dbReference type="HAMAP" id="MF_00414">
    <property type="entry name" value="UbiB"/>
    <property type="match status" value="1"/>
</dbReference>
<dbReference type="InterPro" id="IPR004147">
    <property type="entry name" value="ABC1_dom"/>
</dbReference>
<dbReference type="InterPro" id="IPR011009">
    <property type="entry name" value="Kinase-like_dom_sf"/>
</dbReference>
<dbReference type="InterPro" id="IPR010232">
    <property type="entry name" value="UbiB"/>
</dbReference>
<dbReference type="InterPro" id="IPR045308">
    <property type="entry name" value="UbiB_bact"/>
</dbReference>
<dbReference type="InterPro" id="IPR050154">
    <property type="entry name" value="UbiB_kinase"/>
</dbReference>
<dbReference type="NCBIfam" id="NF003404">
    <property type="entry name" value="PRK04750.1"/>
    <property type="match status" value="1"/>
</dbReference>
<dbReference type="NCBIfam" id="TIGR01982">
    <property type="entry name" value="UbiB"/>
    <property type="match status" value="1"/>
</dbReference>
<dbReference type="PANTHER" id="PTHR10566">
    <property type="entry name" value="CHAPERONE-ACTIVITY OF BC1 COMPLEX CABC1 -RELATED"/>
    <property type="match status" value="1"/>
</dbReference>
<dbReference type="PANTHER" id="PTHR10566:SF113">
    <property type="entry name" value="PROTEIN ACTIVITY OF BC1 COMPLEX KINASE 7, CHLOROPLASTIC"/>
    <property type="match status" value="1"/>
</dbReference>
<dbReference type="Pfam" id="PF03109">
    <property type="entry name" value="ABC1"/>
    <property type="match status" value="1"/>
</dbReference>
<dbReference type="SUPFAM" id="SSF56112">
    <property type="entry name" value="Protein kinase-like (PK-like)"/>
    <property type="match status" value="1"/>
</dbReference>
<proteinExistence type="inferred from homology"/>
<gene>
    <name evidence="1" type="primary">ubiB</name>
    <name type="ordered locus">VV0179</name>
</gene>